<name>COA3_CANDC</name>
<feature type="chain" id="PRO_0000405438" description="Cytochrome c oxidase assembly factor 3, mitochondrial">
    <location>
        <begin position="1"/>
        <end position="88"/>
    </location>
</feature>
<feature type="topological domain" description="Mitochondrial matrix" evidence="1">
    <location>
        <begin position="1"/>
        <end position="32"/>
    </location>
</feature>
<feature type="transmembrane region" description="Helical" evidence="2">
    <location>
        <begin position="33"/>
        <end position="55"/>
    </location>
</feature>
<feature type="topological domain" description="Mitochondrial intermembrane" evidence="1">
    <location>
        <begin position="56"/>
        <end position="88"/>
    </location>
</feature>
<organism>
    <name type="scientific">Candida dubliniensis (strain CD36 / ATCC MYA-646 / CBS 7987 / NCPF 3949 / NRRL Y-17841)</name>
    <name type="common">Yeast</name>
    <dbReference type="NCBI Taxonomy" id="573826"/>
    <lineage>
        <taxon>Eukaryota</taxon>
        <taxon>Fungi</taxon>
        <taxon>Dikarya</taxon>
        <taxon>Ascomycota</taxon>
        <taxon>Saccharomycotina</taxon>
        <taxon>Pichiomycetes</taxon>
        <taxon>Debaryomycetaceae</taxon>
        <taxon>Candida/Lodderomyces clade</taxon>
        <taxon>Candida</taxon>
    </lineage>
</organism>
<proteinExistence type="inferred from homology"/>
<evidence type="ECO:0000250" key="1"/>
<evidence type="ECO:0000255" key="2"/>
<evidence type="ECO:0000305" key="3"/>
<accession>B9WK46</accession>
<protein>
    <recommendedName>
        <fullName>Cytochrome c oxidase assembly factor 3, mitochondrial</fullName>
    </recommendedName>
</protein>
<sequence length="88" mass="10135">MGKLVGAPKGHDRYRDPKTHQITPALYRVRAPFFWRNTIALFAVSSIPLAVYLYTFKKMGDDDLGDIPIPPISDEELQKLKLEYENQK</sequence>
<keyword id="KW-0472">Membrane</keyword>
<keyword id="KW-0496">Mitochondrion</keyword>
<keyword id="KW-0999">Mitochondrion inner membrane</keyword>
<keyword id="KW-0812">Transmembrane</keyword>
<keyword id="KW-1133">Transmembrane helix</keyword>
<gene>
    <name type="primary">COA3</name>
    <name type="ORF">CD36_71440</name>
</gene>
<dbReference type="EMBL" id="FM992694">
    <property type="protein sequence ID" value="CAX40697.1"/>
    <property type="molecule type" value="Genomic_DNA"/>
</dbReference>
<dbReference type="RefSeq" id="XP_002421363.1">
    <property type="nucleotide sequence ID" value="XM_002421318.1"/>
</dbReference>
<dbReference type="GeneID" id="8049330"/>
<dbReference type="KEGG" id="cdu:CD36_71440"/>
<dbReference type="CGD" id="CAL0000159215">
    <property type="gene designation" value="Cd36_71440"/>
</dbReference>
<dbReference type="VEuPathDB" id="FungiDB:CD36_71440"/>
<dbReference type="eggNOG" id="ENOG502S440">
    <property type="taxonomic scope" value="Eukaryota"/>
</dbReference>
<dbReference type="HOGENOM" id="CLU_153999_0_0_1"/>
<dbReference type="OrthoDB" id="10018333at2759"/>
<dbReference type="Proteomes" id="UP000002605">
    <property type="component" value="Chromosome 7"/>
</dbReference>
<dbReference type="GO" id="GO:0005743">
    <property type="term" value="C:mitochondrial inner membrane"/>
    <property type="evidence" value="ECO:0007669"/>
    <property type="project" value="UniProtKB-SubCell"/>
</dbReference>
<dbReference type="GO" id="GO:0033617">
    <property type="term" value="P:mitochondrial cytochrome c oxidase assembly"/>
    <property type="evidence" value="ECO:0007669"/>
    <property type="project" value="InterPro"/>
</dbReference>
<dbReference type="InterPro" id="IPR041752">
    <property type="entry name" value="Coa3"/>
</dbReference>
<dbReference type="PANTHER" id="PTHR15642:SF3">
    <property type="entry name" value="CYTOCHROME C OXIDASE ASSEMBLY FACTOR 3 HOMOLOG, MITOCHONDRIAL"/>
    <property type="match status" value="1"/>
</dbReference>
<dbReference type="PANTHER" id="PTHR15642">
    <property type="entry name" value="CYTOCHROME C OXIDASE ASSEMBLY FACTOR 3, MITOCHONDRIAL"/>
    <property type="match status" value="1"/>
</dbReference>
<comment type="function">
    <text evidence="1">Required for assembly of cytochrome c oxidase (complex IV).</text>
</comment>
<comment type="subunit">
    <text evidence="1">Component of 250-400 kDa complexes called cytochrome oxidase assembly intermediates or COA complexes.</text>
</comment>
<comment type="subcellular location">
    <subcellularLocation>
        <location>Mitochondrion inner membrane</location>
        <topology>Single-pass membrane protein</topology>
    </subcellularLocation>
</comment>
<comment type="similarity">
    <text evidence="3">Belongs to the COA3 family.</text>
</comment>
<reference key="1">
    <citation type="journal article" date="2009" name="Genome Res.">
        <title>Comparative genomics of the fungal pathogens Candida dubliniensis and Candida albicans.</title>
        <authorList>
            <person name="Jackson A.P."/>
            <person name="Gamble J.A."/>
            <person name="Yeomans T."/>
            <person name="Moran G.P."/>
            <person name="Saunders D."/>
            <person name="Harris D."/>
            <person name="Aslett M."/>
            <person name="Barrell J.F."/>
            <person name="Butler G."/>
            <person name="Citiulo F."/>
            <person name="Coleman D.C."/>
            <person name="de Groot P.W.J."/>
            <person name="Goodwin T.J."/>
            <person name="Quail M.A."/>
            <person name="McQuillan J."/>
            <person name="Munro C.A."/>
            <person name="Pain A."/>
            <person name="Poulter R.T."/>
            <person name="Rajandream M.A."/>
            <person name="Renauld H."/>
            <person name="Spiering M.J."/>
            <person name="Tivey A."/>
            <person name="Gow N.A.R."/>
            <person name="Barrell B."/>
            <person name="Sullivan D.J."/>
            <person name="Berriman M."/>
        </authorList>
    </citation>
    <scope>NUCLEOTIDE SEQUENCE [LARGE SCALE GENOMIC DNA]</scope>
    <source>
        <strain>CD36 / ATCC MYA-646 / CBS 7987 / NCPF 3949 / NRRL Y-17841</strain>
    </source>
</reference>